<feature type="signal peptide" evidence="1">
    <location>
        <begin position="1"/>
        <end position="20"/>
    </location>
</feature>
<feature type="chain" id="PRO_5000115454" description="UPF0319 protein YPN_2537">
    <location>
        <begin position="21"/>
        <end position="226"/>
    </location>
</feature>
<protein>
    <recommendedName>
        <fullName evidence="1">UPF0319 protein YPN_2537</fullName>
    </recommendedName>
</protein>
<dbReference type="EMBL" id="CP000305">
    <property type="protein sequence ID" value="ABG18865.1"/>
    <property type="molecule type" value="Genomic_DNA"/>
</dbReference>
<dbReference type="EMBL" id="ACNQ01000015">
    <property type="protein sequence ID" value="EEO75975.1"/>
    <property type="molecule type" value="Genomic_DNA"/>
</dbReference>
<dbReference type="RefSeq" id="WP_002213058.1">
    <property type="nucleotide sequence ID" value="NZ_ACNQ01000015.1"/>
</dbReference>
<dbReference type="KEGG" id="ypn:YPN_2537"/>
<dbReference type="HOGENOM" id="CLU_073782_2_0_6"/>
<dbReference type="Proteomes" id="UP000008936">
    <property type="component" value="Chromosome"/>
</dbReference>
<dbReference type="HAMAP" id="MF_00789">
    <property type="entry name" value="UPF0319"/>
    <property type="match status" value="1"/>
</dbReference>
<dbReference type="InterPro" id="IPR018635">
    <property type="entry name" value="UPF0319"/>
</dbReference>
<dbReference type="NCBIfam" id="NF002967">
    <property type="entry name" value="PRK03641.1"/>
    <property type="match status" value="1"/>
</dbReference>
<dbReference type="PANTHER" id="PTHR38108">
    <property type="entry name" value="UPF0319 PROTEIN YCCT"/>
    <property type="match status" value="1"/>
</dbReference>
<dbReference type="PANTHER" id="PTHR38108:SF1">
    <property type="entry name" value="UPF0319 PROTEIN YCCT"/>
    <property type="match status" value="1"/>
</dbReference>
<dbReference type="Pfam" id="PF09829">
    <property type="entry name" value="DUF2057"/>
    <property type="match status" value="1"/>
</dbReference>
<keyword id="KW-0732">Signal</keyword>
<reference key="1">
    <citation type="journal article" date="2006" name="J. Bacteriol.">
        <title>Complete genome sequence of Yersinia pestis strains Antiqua and Nepal516: evidence of gene reduction in an emerging pathogen.</title>
        <authorList>
            <person name="Chain P.S.G."/>
            <person name="Hu P."/>
            <person name="Malfatti S.A."/>
            <person name="Radnedge L."/>
            <person name="Larimer F."/>
            <person name="Vergez L.M."/>
            <person name="Worsham P."/>
            <person name="Chu M.C."/>
            <person name="Andersen G.L."/>
        </authorList>
    </citation>
    <scope>NUCLEOTIDE SEQUENCE [LARGE SCALE GENOMIC DNA]</scope>
    <source>
        <strain>Nepal516</strain>
    </source>
</reference>
<reference key="2">
    <citation type="submission" date="2009-04" db="EMBL/GenBank/DDBJ databases">
        <title>Yersinia pestis Nepal516A whole genome shotgun sequencing project.</title>
        <authorList>
            <person name="Plunkett G. III"/>
            <person name="Anderson B.D."/>
            <person name="Baumler D.J."/>
            <person name="Burland V."/>
            <person name="Cabot E.L."/>
            <person name="Glasner J.D."/>
            <person name="Mau B."/>
            <person name="Neeno-Eckwall E."/>
            <person name="Perna N.T."/>
            <person name="Munk A.C."/>
            <person name="Tapia R."/>
            <person name="Green L.D."/>
            <person name="Rogers Y.C."/>
            <person name="Detter J.C."/>
            <person name="Bruce D.C."/>
            <person name="Brettin T.S."/>
        </authorList>
    </citation>
    <scope>NUCLEOTIDE SEQUENCE [LARGE SCALE GENOMIC DNA]</scope>
    <source>
        <strain>Nepal516</strain>
    </source>
</reference>
<sequence>MKLGLVAGMLAVCFSFSSVAMTLKLTPEIDLLVVDGKNMSGSLLKGADSLELNSGMHQILFKVIKPLPTDPLVLYSSPPLIVVFNAHNTRSVAIKLPVINTLRDGHQFSKNPLYQLIGDNGHPLSVRHDVLRQDHLNNSTTLETVMAAYNVGKYNASVPAFAAIPPSPVSAVPGTTIPVAGVNTPHKTASLQGENVTEQMLQYWFLQANPETQKRFLIWAKKQPIH</sequence>
<gene>
    <name type="ordered locus">YPN_2537</name>
    <name type="ORF">YP516_2851</name>
</gene>
<evidence type="ECO:0000255" key="1">
    <source>
        <dbReference type="HAMAP-Rule" id="MF_00789"/>
    </source>
</evidence>
<organism>
    <name type="scientific">Yersinia pestis bv. Antiqua (strain Nepal516)</name>
    <dbReference type="NCBI Taxonomy" id="377628"/>
    <lineage>
        <taxon>Bacteria</taxon>
        <taxon>Pseudomonadati</taxon>
        <taxon>Pseudomonadota</taxon>
        <taxon>Gammaproteobacteria</taxon>
        <taxon>Enterobacterales</taxon>
        <taxon>Yersiniaceae</taxon>
        <taxon>Yersinia</taxon>
    </lineage>
</organism>
<comment type="similarity">
    <text evidence="1">Belongs to the UPF0319 family.</text>
</comment>
<accession>Q1CGL5</accession>
<accession>C4GVL9</accession>
<proteinExistence type="inferred from homology"/>
<name>Y2537_YERPN</name>